<dbReference type="EMBL" id="AY817012">
    <property type="protein sequence ID" value="AAW49256.1"/>
    <property type="molecule type" value="mRNA"/>
</dbReference>
<dbReference type="EMBL" id="AC005397">
    <property type="protein sequence ID" value="AAM15048.1"/>
    <property type="molecule type" value="Genomic_DNA"/>
</dbReference>
<dbReference type="EMBL" id="CP002685">
    <property type="protein sequence ID" value="AEC10659.1"/>
    <property type="molecule type" value="Genomic_DNA"/>
</dbReference>
<dbReference type="EMBL" id="AK118876">
    <property type="protein sequence ID" value="BAC43461.1"/>
    <property type="molecule type" value="mRNA"/>
</dbReference>
<dbReference type="EMBL" id="AY085146">
    <property type="protein sequence ID" value="AAM61699.1"/>
    <property type="molecule type" value="mRNA"/>
</dbReference>
<dbReference type="RefSeq" id="NP_566067.1">
    <molecule id="Q8S8M5-1"/>
    <property type="nucleotide sequence ID" value="NM_130185.3"/>
</dbReference>
<dbReference type="SMR" id="Q8S8M5"/>
<dbReference type="BioGRID" id="4565">
    <property type="interactions" value="2"/>
</dbReference>
<dbReference type="FunCoup" id="Q8S8M5">
    <property type="interactions" value="1661"/>
</dbReference>
<dbReference type="IntAct" id="Q8S8M5">
    <property type="interactions" value="11"/>
</dbReference>
<dbReference type="STRING" id="3702.Q8S8M5"/>
<dbReference type="iPTMnet" id="Q8S8M5"/>
<dbReference type="PaxDb" id="3702-AT2G46225.2"/>
<dbReference type="ProteomicsDB" id="244364">
    <molecule id="Q8S8M5-1"/>
</dbReference>
<dbReference type="DNASU" id="819230"/>
<dbReference type="EnsemblPlants" id="AT2G46225.1">
    <molecule id="Q8S8M5-1"/>
    <property type="protein sequence ID" value="AT2G46225.1"/>
    <property type="gene ID" value="AT2G46225"/>
</dbReference>
<dbReference type="GeneID" id="819230"/>
<dbReference type="Gramene" id="AT2G46225.1">
    <molecule id="Q8S8M5-1"/>
    <property type="protein sequence ID" value="AT2G46225.1"/>
    <property type="gene ID" value="AT2G46225"/>
</dbReference>
<dbReference type="KEGG" id="ath:AT2G46225"/>
<dbReference type="Araport" id="AT2G46225"/>
<dbReference type="TAIR" id="AT2G46225">
    <property type="gene designation" value="ABIL1"/>
</dbReference>
<dbReference type="eggNOG" id="KOG2546">
    <property type="taxonomic scope" value="Eukaryota"/>
</dbReference>
<dbReference type="InParanoid" id="Q8S8M5"/>
<dbReference type="OMA" id="DVVSMEH"/>
<dbReference type="OrthoDB" id="5971719at2759"/>
<dbReference type="PhylomeDB" id="Q8S8M5"/>
<dbReference type="PRO" id="PR:Q8S8M5"/>
<dbReference type="Proteomes" id="UP000006548">
    <property type="component" value="Chromosome 2"/>
</dbReference>
<dbReference type="ExpressionAtlas" id="Q8S8M5">
    <property type="expression patterns" value="baseline and differential"/>
</dbReference>
<dbReference type="GO" id="GO:0005737">
    <property type="term" value="C:cytoplasm"/>
    <property type="evidence" value="ECO:0007669"/>
    <property type="project" value="UniProtKB-KW"/>
</dbReference>
<dbReference type="GO" id="GO:0005856">
    <property type="term" value="C:cytoskeleton"/>
    <property type="evidence" value="ECO:0007669"/>
    <property type="project" value="UniProtKB-SubCell"/>
</dbReference>
<dbReference type="Gene3D" id="6.10.140.1620">
    <property type="match status" value="1"/>
</dbReference>
<dbReference type="InterPro" id="IPR028457">
    <property type="entry name" value="ABI"/>
</dbReference>
<dbReference type="PANTHER" id="PTHR10460:SF0">
    <property type="entry name" value="ABELSON INTERACTING PROTEIN, ISOFORM D"/>
    <property type="match status" value="1"/>
</dbReference>
<dbReference type="PANTHER" id="PTHR10460">
    <property type="entry name" value="ABL INTERACTOR FAMILY MEMBER"/>
    <property type="match status" value="1"/>
</dbReference>
<reference key="1">
    <citation type="journal article" date="2005" name="Plant Cell">
        <title>DISTORTED3/SCAR2 is a putative Arabidopsis WAVE complex subunit that activates the Arp2/3 complex and is required for epidermal morphogenesis.</title>
        <authorList>
            <person name="Basu D."/>
            <person name="Le J."/>
            <person name="El-Din El-Assal S."/>
            <person name="Huang S."/>
            <person name="Zhang C."/>
            <person name="Mallery E.L."/>
            <person name="Koliantz G."/>
            <person name="Staiger C.J."/>
            <person name="Szymanski D.B."/>
        </authorList>
    </citation>
    <scope>NUCLEOTIDE SEQUENCE [MRNA]</scope>
    <scope>TISSUE SPECIFICITY</scope>
    <scope>INTERACTION WITH SCAR2</scope>
</reference>
<reference key="2">
    <citation type="journal article" date="1999" name="Nature">
        <title>Sequence and analysis of chromosome 2 of the plant Arabidopsis thaliana.</title>
        <authorList>
            <person name="Lin X."/>
            <person name="Kaul S."/>
            <person name="Rounsley S.D."/>
            <person name="Shea T.P."/>
            <person name="Benito M.-I."/>
            <person name="Town C.D."/>
            <person name="Fujii C.Y."/>
            <person name="Mason T.M."/>
            <person name="Bowman C.L."/>
            <person name="Barnstead M.E."/>
            <person name="Feldblyum T.V."/>
            <person name="Buell C.R."/>
            <person name="Ketchum K.A."/>
            <person name="Lee J.J."/>
            <person name="Ronning C.M."/>
            <person name="Koo H.L."/>
            <person name="Moffat K.S."/>
            <person name="Cronin L.A."/>
            <person name="Shen M."/>
            <person name="Pai G."/>
            <person name="Van Aken S."/>
            <person name="Umayam L."/>
            <person name="Tallon L.J."/>
            <person name="Gill J.E."/>
            <person name="Adams M.D."/>
            <person name="Carrera A.J."/>
            <person name="Creasy T.H."/>
            <person name="Goodman H.M."/>
            <person name="Somerville C.R."/>
            <person name="Copenhaver G.P."/>
            <person name="Preuss D."/>
            <person name="Nierman W.C."/>
            <person name="White O."/>
            <person name="Eisen J.A."/>
            <person name="Salzberg S.L."/>
            <person name="Fraser C.M."/>
            <person name="Venter J.C."/>
        </authorList>
    </citation>
    <scope>NUCLEOTIDE SEQUENCE [LARGE SCALE GENOMIC DNA]</scope>
    <source>
        <strain>cv. Columbia</strain>
    </source>
</reference>
<reference key="3">
    <citation type="journal article" date="2017" name="Plant J.">
        <title>Araport11: a complete reannotation of the Arabidopsis thaliana reference genome.</title>
        <authorList>
            <person name="Cheng C.Y."/>
            <person name="Krishnakumar V."/>
            <person name="Chan A.P."/>
            <person name="Thibaud-Nissen F."/>
            <person name="Schobel S."/>
            <person name="Town C.D."/>
        </authorList>
    </citation>
    <scope>GENOME REANNOTATION</scope>
    <source>
        <strain>cv. Columbia</strain>
    </source>
</reference>
<reference key="4">
    <citation type="journal article" date="2002" name="Science">
        <title>Functional annotation of a full-length Arabidopsis cDNA collection.</title>
        <authorList>
            <person name="Seki M."/>
            <person name="Narusaka M."/>
            <person name="Kamiya A."/>
            <person name="Ishida J."/>
            <person name="Satou M."/>
            <person name="Sakurai T."/>
            <person name="Nakajima M."/>
            <person name="Enju A."/>
            <person name="Akiyama K."/>
            <person name="Oono Y."/>
            <person name="Muramatsu M."/>
            <person name="Hayashizaki Y."/>
            <person name="Kawai J."/>
            <person name="Carninci P."/>
            <person name="Itoh M."/>
            <person name="Ishii Y."/>
            <person name="Arakawa T."/>
            <person name="Shibata K."/>
            <person name="Shinagawa A."/>
            <person name="Shinozaki K."/>
        </authorList>
    </citation>
    <scope>NUCLEOTIDE SEQUENCE [LARGE SCALE MRNA]</scope>
    <source>
        <strain>cv. Columbia</strain>
    </source>
</reference>
<reference key="5">
    <citation type="submission" date="2002-03" db="EMBL/GenBank/DDBJ databases">
        <title>Full-length cDNA from Arabidopsis thaliana.</title>
        <authorList>
            <person name="Brover V.V."/>
            <person name="Troukhan M.E."/>
            <person name="Alexandrov N.A."/>
            <person name="Lu Y.-P."/>
            <person name="Flavell R.B."/>
            <person name="Feldmann K.A."/>
        </authorList>
    </citation>
    <scope>NUCLEOTIDE SEQUENCE [LARGE SCALE MRNA]</scope>
</reference>
<proteinExistence type="evidence at protein level"/>
<name>ABIL1_ARATH</name>
<protein>
    <recommendedName>
        <fullName>Protein ABIL1</fullName>
    </recommendedName>
    <alternativeName>
        <fullName>Abl interactor-like protein 1</fullName>
        <shortName>AtABIL1</shortName>
    </alternativeName>
</protein>
<sequence length="298" mass="33196">METEISGMDNPAMTLDEVSMERNKSFVKALQELKNLRPQLYSAADYCEKSYLHSEQKQMVLDNLKDYTVKALVNAVDHLGTVASKLTDLFDHQNSDISTMEMRASCVSQQLLTCRTYIDKEGLRQQQLLAVIPLHHKHYILPNSVNKRVHFSPLRRTDTRQNHYQAISRLQPSDAPASKSLSWHLGSETKSTLKGTSTVAPSSKDSKAFSKTSGVFHLLGDDENIANKKPLAGSQVSGVPAASTAHKDLEVPKLLTAHRSLDNNPRREIIQAPVRTKSVLSAFFVKQKTPKLKAGYVS</sequence>
<comment type="function">
    <text evidence="1">Involved in regulation of actin and microtubule organization. Part of a WAVE complex that activates the Arp2/3 complex (By similarity).</text>
</comment>
<comment type="subunit">
    <text>Binds SCAR2.</text>
</comment>
<comment type="interaction">
    <interactant intactId="EBI-1547655">
        <id>Q8S8M5</id>
    </interactant>
    <interactant intactId="EBI-1547795">
        <id>Q5XPJ9</id>
        <label>SCAR2</label>
    </interactant>
    <organismsDiffer>false</organismsDiffer>
    <experiments>3</experiments>
</comment>
<comment type="subcellular location">
    <subcellularLocation>
        <location evidence="1">Cytoplasm</location>
        <location evidence="1">Cytoskeleton</location>
    </subcellularLocation>
</comment>
<comment type="alternative products">
    <event type="alternative splicing"/>
    <isoform>
        <id>Q8S8M5-1</id>
        <name>1</name>
        <sequence type="displayed"/>
    </isoform>
    <text>A number of isoforms are produced. According to EST sequences.</text>
</comment>
<comment type="tissue specificity">
    <text evidence="2">Expressed in seedlings, roots, hypocotyls, cotyledons, leaves, stems, and flowers.</text>
</comment>
<comment type="similarity">
    <text evidence="3">Belongs to the ABI family.</text>
</comment>
<gene>
    <name type="primary">ABIL1</name>
    <name type="ordered locus">At2g46225</name>
    <name type="ORF">T3F17</name>
</gene>
<feature type="chain" id="PRO_0000191794" description="Protein ABIL1">
    <location>
        <begin position="1"/>
        <end position="298"/>
    </location>
</feature>
<feature type="sequence conflict" description="In Ref. 4; BAC43461." evidence="3" ref="4">
    <original>Q</original>
    <variation>L</variation>
    <location>
        <position position="271"/>
    </location>
</feature>
<organism>
    <name type="scientific">Arabidopsis thaliana</name>
    <name type="common">Mouse-ear cress</name>
    <dbReference type="NCBI Taxonomy" id="3702"/>
    <lineage>
        <taxon>Eukaryota</taxon>
        <taxon>Viridiplantae</taxon>
        <taxon>Streptophyta</taxon>
        <taxon>Embryophyta</taxon>
        <taxon>Tracheophyta</taxon>
        <taxon>Spermatophyta</taxon>
        <taxon>Magnoliopsida</taxon>
        <taxon>eudicotyledons</taxon>
        <taxon>Gunneridae</taxon>
        <taxon>Pentapetalae</taxon>
        <taxon>rosids</taxon>
        <taxon>malvids</taxon>
        <taxon>Brassicales</taxon>
        <taxon>Brassicaceae</taxon>
        <taxon>Camelineae</taxon>
        <taxon>Arabidopsis</taxon>
    </lineage>
</organism>
<keyword id="KW-0025">Alternative splicing</keyword>
<keyword id="KW-0963">Cytoplasm</keyword>
<keyword id="KW-0206">Cytoskeleton</keyword>
<keyword id="KW-1185">Reference proteome</keyword>
<accession>Q8S8M5</accession>
<accession>Q8GWF6</accession>
<evidence type="ECO:0000250" key="1"/>
<evidence type="ECO:0000269" key="2">
    <source>
    </source>
</evidence>
<evidence type="ECO:0000305" key="3"/>